<name>HUMMR_MOUSE</name>
<keyword id="KW-0472">Membrane</keyword>
<keyword id="KW-0496">Mitochondrion</keyword>
<keyword id="KW-0999">Mitochondrion inner membrane</keyword>
<keyword id="KW-1000">Mitochondrion outer membrane</keyword>
<keyword id="KW-1185">Reference proteome</keyword>
<keyword id="KW-0812">Transmembrane</keyword>
<keyword id="KW-1133">Transmembrane helix</keyword>
<gene>
    <name type="primary">Mgarp</name>
    <name type="synonym">Cesp1</name>
    <name type="synonym">Hummr</name>
    <name type="synonym">Osap</name>
</gene>
<accession>Q8VI64</accession>
<accession>Q96EB2</accession>
<accession>Q9D9Y5</accession>
<feature type="chain" id="PRO_0000318765" description="Protein MGARP">
    <location>
        <begin position="1"/>
        <end position="283"/>
    </location>
</feature>
<feature type="topological domain" description="Cytoplasmic" evidence="11 12">
    <location>
        <begin position="1"/>
        <end position="41"/>
    </location>
</feature>
<feature type="transmembrane region" description="Helical; Anchor for type IV membrane protein" evidence="1">
    <location>
        <begin position="42"/>
        <end position="64"/>
    </location>
</feature>
<feature type="topological domain" description="Mitochondrial intermembrane" evidence="11 12">
    <location>
        <begin position="65"/>
        <end position="283"/>
    </location>
</feature>
<feature type="region of interest" description="Disordered" evidence="2">
    <location>
        <begin position="1"/>
        <end position="36"/>
    </location>
</feature>
<feature type="region of interest" description="Disordered" evidence="2">
    <location>
        <begin position="78"/>
        <end position="101"/>
    </location>
</feature>
<feature type="region of interest" description="Disordered" evidence="2">
    <location>
        <begin position="118"/>
        <end position="283"/>
    </location>
</feature>
<feature type="compositionally biased region" description="Low complexity" evidence="2">
    <location>
        <begin position="128"/>
        <end position="160"/>
    </location>
</feature>
<feature type="compositionally biased region" description="Polar residues" evidence="2">
    <location>
        <begin position="171"/>
        <end position="184"/>
    </location>
</feature>
<feature type="compositionally biased region" description="Polar residues" evidence="2">
    <location>
        <begin position="199"/>
        <end position="220"/>
    </location>
</feature>
<feature type="compositionally biased region" description="Basic and acidic residues" evidence="2">
    <location>
        <begin position="221"/>
        <end position="245"/>
    </location>
</feature>
<feature type="sequence conflict" description="In Ref. 2; BAB24535." evidence="10" ref="2">
    <original>R</original>
    <variation>S</variation>
    <location>
        <position position="4"/>
    </location>
</feature>
<protein>
    <recommendedName>
        <fullName>Protein MGARP</fullName>
    </recommendedName>
    <alternativeName>
        <fullName>Corneal endothelium-specific protein 1</fullName>
        <shortName>CESP-1</shortName>
    </alternativeName>
    <alternativeName>
        <fullName>Hypoxia up-regulated mitochondrial movement regulator protein</fullName>
    </alternativeName>
    <alternativeName>
        <fullName>Mitochondria-localized glutamic acid-rich protein</fullName>
    </alternativeName>
    <alternativeName>
        <fullName>Ovary-specific acidic protein</fullName>
    </alternativeName>
</protein>
<sequence length="283" mass="29925">MYLRRAVSKTLALPRRAPPGPAPLGKDASLRRMSSRKFPGTSGSNMIYYLVVGVTVSAGGYYTYKALTSKQVRRTEHVAEPKEQTKAELQPLPGEKEEHVAEAEQVCSEPGDTAVTEAESVDAEEVPEAAVVLPEESQASAPSEVPAEAAVVEASLSSSEPELKITEASLVETTESVPESTQEVESAAPDQDDVCNEGADTSQEGADTSQEGADTSQEGADTTKEEADNSKEAEGTTTEDPRSISEESAELEESPPLGSEPPAQPESQEEETQVTEETASPQG</sequence>
<comment type="function">
    <text evidence="4 5 8">Plays a role in the trafficking of mitochondria along microtubules (PubMed:19325000). Regulates the kinesin-mediated axonal transport of mitochondria to nerve terminals along microtubules during hypoxia (PubMed:19325000). Participates in the translocation of TRAK2/GRIF1 from the cytoplasm to the mitochondrion (PubMed:19325000). Also plays a role in steroidogenesis through maintenance of mitochondrial abundance and morphology (PubMed:19528298). Plays an inhibitory role during neocortex development by regulating mitochondrial morphology, distribution and motility in neocortical neurons (PubMed:24323429).</text>
</comment>
<comment type="subunit">
    <text evidence="5">Interacts with RHOT1/Miro-1, RHOT2/Miro-2, TRAK1/OIP106 and TRAK2/GRIF1.</text>
</comment>
<comment type="subcellular location">
    <subcellularLocation>
        <location evidence="4 5 6 8">Mitochondrion</location>
    </subcellularLocation>
    <subcellularLocation>
        <location evidence="5">Mitochondrion outer membrane</location>
        <topology evidence="11">Single-pass type IV membrane protein</topology>
        <orientation evidence="11">Cytoplasmic side</orientation>
    </subcellularLocation>
    <subcellularLocation>
        <location evidence="9">Mitochondrion inner membrane</location>
        <topology evidence="12">Single-pass type IV membrane protein</topology>
        <orientation evidence="12">Cytoplasmic side</orientation>
    </subcellularLocation>
    <text evidence="5">Colocalizes with RHOT1, RHOT2, TRAK1 and TRAK2 at the mitochondrion.</text>
</comment>
<comment type="tissue specificity">
    <text evidence="3 4 5 6 7">Expressed in the ovary, testis, brain, adrenal glands and the compartments of the visual nervous system. Expressed in corneal endothelium (CE) (at protein level). Expressed in steroidogenic tissues with the highest level of expression observed in the adrenal gland. Weakly expressed in placenta. Weakly expressed in astrocytes and neurons under normoxia. Strongly expressed in astrocytes and neurons under hypoxia. Expressed in each layer of the retina, with particularly higher staining in the inner segment of the photoreceptor (IS), the outer plexiform layer (OPL) and the ganglion cell layer (GCL).</text>
</comment>
<comment type="induction">
    <text evidence="4 5 6">Up-regulated by chorionic gonadotropin in ovary. Up-regulated by hypoxia in a HIF-1A-dependent manner in neurons and astrocytes. Up-regulated during gonad development after birth, probably under the regulation of hormones derived from the hypothalamic-pituitary-gonadal (HPG) axis.</text>
</comment>
<comment type="disruption phenotype">
    <text evidence="5 8">Reduction of mitochondrial motion in the anterograde direction and increase of mitochondrial motion in the retrograde direction in response to hypoxia (PubMed:19528298). The number of motile mitochondria is not altered (PubMed:19528298). Neocortical neurons exhibit a remarkable increase of the dendritic number and the axon length (PubMed:24323429). Neuronal cells show an increase in the percentage of round mitochondria and a decrease in the percentage of rod or tubular mitochondria (PubMed:24323429).</text>
</comment>
<evidence type="ECO:0000255" key="1"/>
<evidence type="ECO:0000256" key="2">
    <source>
        <dbReference type="SAM" id="MobiDB-lite"/>
    </source>
</evidence>
<evidence type="ECO:0000269" key="3">
    <source>
    </source>
</evidence>
<evidence type="ECO:0000269" key="4">
    <source>
    </source>
</evidence>
<evidence type="ECO:0000269" key="5">
    <source>
    </source>
</evidence>
<evidence type="ECO:0000269" key="6">
    <source>
    </source>
</evidence>
<evidence type="ECO:0000269" key="7">
    <source>
    </source>
</evidence>
<evidence type="ECO:0000269" key="8">
    <source>
    </source>
</evidence>
<evidence type="ECO:0000269" key="9">
    <source>
    </source>
</evidence>
<evidence type="ECO:0000305" key="10"/>
<evidence type="ECO:0000305" key="11">
    <source>
    </source>
</evidence>
<evidence type="ECO:0000305" key="12">
    <source>
    </source>
</evidence>
<organism>
    <name type="scientific">Mus musculus</name>
    <name type="common">Mouse</name>
    <dbReference type="NCBI Taxonomy" id="10090"/>
    <lineage>
        <taxon>Eukaryota</taxon>
        <taxon>Metazoa</taxon>
        <taxon>Chordata</taxon>
        <taxon>Craniata</taxon>
        <taxon>Vertebrata</taxon>
        <taxon>Euteleostomi</taxon>
        <taxon>Mammalia</taxon>
        <taxon>Eutheria</taxon>
        <taxon>Euarchontoglires</taxon>
        <taxon>Glires</taxon>
        <taxon>Rodentia</taxon>
        <taxon>Myomorpha</taxon>
        <taxon>Muroidea</taxon>
        <taxon>Muridae</taxon>
        <taxon>Murinae</taxon>
        <taxon>Mus</taxon>
        <taxon>Mus</taxon>
    </lineage>
</organism>
<dbReference type="EMBL" id="AF228502">
    <property type="protein sequence ID" value="AAL55654.1"/>
    <property type="molecule type" value="mRNA"/>
</dbReference>
<dbReference type="EMBL" id="AK006339">
    <property type="protein sequence ID" value="BAB24535.1"/>
    <property type="molecule type" value="mRNA"/>
</dbReference>
<dbReference type="EMBL" id="AK151401">
    <property type="protein sequence ID" value="BAE30369.1"/>
    <property type="molecule type" value="mRNA"/>
</dbReference>
<dbReference type="EMBL" id="BC012511">
    <property type="protein sequence ID" value="AAH12511.1"/>
    <property type="molecule type" value="mRNA"/>
</dbReference>
<dbReference type="EMBL" id="BC049556">
    <property type="protein sequence ID" value="AAH49556.1"/>
    <property type="molecule type" value="mRNA"/>
</dbReference>
<dbReference type="CCDS" id="CCDS17338.1"/>
<dbReference type="RefSeq" id="NP_080634.2">
    <property type="nucleotide sequence ID" value="NM_026358.3"/>
</dbReference>
<dbReference type="FunCoup" id="Q8VI64">
    <property type="interactions" value="45"/>
</dbReference>
<dbReference type="STRING" id="10090.ENSMUSP00000040703"/>
<dbReference type="iPTMnet" id="Q8VI64"/>
<dbReference type="PhosphoSitePlus" id="Q8VI64"/>
<dbReference type="PaxDb" id="10090-ENSMUSP00000040703"/>
<dbReference type="ProteomicsDB" id="273354"/>
<dbReference type="Antibodypedia" id="7361">
    <property type="antibodies" value="121 antibodies from 19 providers"/>
</dbReference>
<dbReference type="Ensembl" id="ENSMUST00000038154.12">
    <property type="protein sequence ID" value="ENSMUSP00000040703.6"/>
    <property type="gene ID" value="ENSMUSG00000037161.15"/>
</dbReference>
<dbReference type="GeneID" id="67749"/>
<dbReference type="KEGG" id="mmu:67749"/>
<dbReference type="UCSC" id="uc008pdx.2">
    <property type="organism name" value="mouse"/>
</dbReference>
<dbReference type="AGR" id="MGI:1914999"/>
<dbReference type="CTD" id="84709"/>
<dbReference type="MGI" id="MGI:1914999">
    <property type="gene designation" value="Mgarp"/>
</dbReference>
<dbReference type="VEuPathDB" id="HostDB:ENSMUSG00000037161"/>
<dbReference type="eggNOG" id="ENOG502S6ZU">
    <property type="taxonomic scope" value="Eukaryota"/>
</dbReference>
<dbReference type="GeneTree" id="ENSGT00440000037338"/>
<dbReference type="HOGENOM" id="CLU_088276_0_0_1"/>
<dbReference type="InParanoid" id="Q8VI64"/>
<dbReference type="OMA" id="YAYKTIT"/>
<dbReference type="OrthoDB" id="92208at9989"/>
<dbReference type="PhylomeDB" id="Q8VI64"/>
<dbReference type="TreeFam" id="TF336324"/>
<dbReference type="BioGRID-ORCS" id="67749">
    <property type="hits" value="2 hits in 77 CRISPR screens"/>
</dbReference>
<dbReference type="ChiTaRS" id="Mgarp">
    <property type="organism name" value="mouse"/>
</dbReference>
<dbReference type="PRO" id="PR:Q8VI64"/>
<dbReference type="Proteomes" id="UP000000589">
    <property type="component" value="Chromosome 3"/>
</dbReference>
<dbReference type="RNAct" id="Q8VI64">
    <property type="molecule type" value="protein"/>
</dbReference>
<dbReference type="Bgee" id="ENSMUSG00000037161">
    <property type="expression patterns" value="Expressed in epithelium of lens and 115 other cell types or tissues"/>
</dbReference>
<dbReference type="ExpressionAtlas" id="Q8VI64">
    <property type="expression patterns" value="baseline and differential"/>
</dbReference>
<dbReference type="GO" id="GO:1904115">
    <property type="term" value="C:axon cytoplasm"/>
    <property type="evidence" value="ECO:0007669"/>
    <property type="project" value="GOC"/>
</dbReference>
<dbReference type="GO" id="GO:0005743">
    <property type="term" value="C:mitochondrial inner membrane"/>
    <property type="evidence" value="ECO:0000314"/>
    <property type="project" value="UniProtKB"/>
</dbReference>
<dbReference type="GO" id="GO:0005741">
    <property type="term" value="C:mitochondrial outer membrane"/>
    <property type="evidence" value="ECO:0000314"/>
    <property type="project" value="UniProtKB"/>
</dbReference>
<dbReference type="GO" id="GO:0005739">
    <property type="term" value="C:mitochondrion"/>
    <property type="evidence" value="ECO:0000314"/>
    <property type="project" value="UniProtKB"/>
</dbReference>
<dbReference type="GO" id="GO:0008089">
    <property type="term" value="P:anterograde axonal transport"/>
    <property type="evidence" value="ECO:0000315"/>
    <property type="project" value="UniProtKB"/>
</dbReference>
<dbReference type="GO" id="GO:0061564">
    <property type="term" value="P:axon development"/>
    <property type="evidence" value="ECO:0000315"/>
    <property type="project" value="UniProtKB"/>
</dbReference>
<dbReference type="GO" id="GO:0019896">
    <property type="term" value="P:axonal transport of mitochondrion"/>
    <property type="evidence" value="ECO:0000315"/>
    <property type="project" value="UniProtKB"/>
</dbReference>
<dbReference type="GO" id="GO:0097211">
    <property type="term" value="P:cellular response to gonadotropin-releasing hormone"/>
    <property type="evidence" value="ECO:0000314"/>
    <property type="project" value="UniProtKB"/>
</dbReference>
<dbReference type="GO" id="GO:0071456">
    <property type="term" value="P:cellular response to hypoxia"/>
    <property type="evidence" value="ECO:0000314"/>
    <property type="project" value="UniProtKB"/>
</dbReference>
<dbReference type="GO" id="GO:0071383">
    <property type="term" value="P:cellular response to steroid hormone stimulus"/>
    <property type="evidence" value="ECO:0000315"/>
    <property type="project" value="UniProtKB"/>
</dbReference>
<dbReference type="GO" id="GO:0021987">
    <property type="term" value="P:cerebral cortex development"/>
    <property type="evidence" value="ECO:0000315"/>
    <property type="project" value="UniProtKB"/>
</dbReference>
<dbReference type="GO" id="GO:2000171">
    <property type="term" value="P:negative regulation of dendrite development"/>
    <property type="evidence" value="ECO:0000315"/>
    <property type="project" value="UniProtKB"/>
</dbReference>
<dbReference type="GO" id="GO:0006626">
    <property type="term" value="P:protein targeting to mitochondrion"/>
    <property type="evidence" value="ECO:0000314"/>
    <property type="project" value="UniProtKB"/>
</dbReference>
<dbReference type="GO" id="GO:0010821">
    <property type="term" value="P:regulation of mitochondrion organization"/>
    <property type="evidence" value="ECO:0000315"/>
    <property type="project" value="UniProtKB"/>
</dbReference>
<dbReference type="GO" id="GO:0008090">
    <property type="term" value="P:retrograde axonal transport"/>
    <property type="evidence" value="ECO:0000315"/>
    <property type="project" value="UniProtKB"/>
</dbReference>
<dbReference type="InterPro" id="IPR026093">
    <property type="entry name" value="MGARP"/>
</dbReference>
<dbReference type="InterPro" id="IPR032773">
    <property type="entry name" value="MGARP_N"/>
</dbReference>
<dbReference type="PANTHER" id="PTHR22910">
    <property type="entry name" value="PROTEIN MGARP"/>
    <property type="match status" value="1"/>
</dbReference>
<dbReference type="PANTHER" id="PTHR22910:SF6">
    <property type="entry name" value="PROTEIN MGARP"/>
    <property type="match status" value="1"/>
</dbReference>
<dbReference type="Pfam" id="PF14962">
    <property type="entry name" value="AIF-MLS"/>
    <property type="match status" value="1"/>
</dbReference>
<reference key="1">
    <citation type="journal article" date="2000" name="Endocrinology">
        <title>Ovary-selective genes I: the generation and characterization of an ovary-selective complementary deoxyribonucleic acid library.</title>
        <authorList>
            <person name="Hennebold J.D."/>
            <person name="Tanaka M."/>
            <person name="Saito J."/>
            <person name="Hanson B.R."/>
            <person name="Adashi E.Y."/>
        </authorList>
    </citation>
    <scope>NUCLEOTIDE SEQUENCE [MRNA]</scope>
    <source>
        <tissue>Ovary</tissue>
    </source>
</reference>
<reference key="2">
    <citation type="journal article" date="2005" name="Science">
        <title>The transcriptional landscape of the mammalian genome.</title>
        <authorList>
            <person name="Carninci P."/>
            <person name="Kasukawa T."/>
            <person name="Katayama S."/>
            <person name="Gough J."/>
            <person name="Frith M.C."/>
            <person name="Maeda N."/>
            <person name="Oyama R."/>
            <person name="Ravasi T."/>
            <person name="Lenhard B."/>
            <person name="Wells C."/>
            <person name="Kodzius R."/>
            <person name="Shimokawa K."/>
            <person name="Bajic V.B."/>
            <person name="Brenner S.E."/>
            <person name="Batalov S."/>
            <person name="Forrest A.R."/>
            <person name="Zavolan M."/>
            <person name="Davis M.J."/>
            <person name="Wilming L.G."/>
            <person name="Aidinis V."/>
            <person name="Allen J.E."/>
            <person name="Ambesi-Impiombato A."/>
            <person name="Apweiler R."/>
            <person name="Aturaliya R.N."/>
            <person name="Bailey T.L."/>
            <person name="Bansal M."/>
            <person name="Baxter L."/>
            <person name="Beisel K.W."/>
            <person name="Bersano T."/>
            <person name="Bono H."/>
            <person name="Chalk A.M."/>
            <person name="Chiu K.P."/>
            <person name="Choudhary V."/>
            <person name="Christoffels A."/>
            <person name="Clutterbuck D.R."/>
            <person name="Crowe M.L."/>
            <person name="Dalla E."/>
            <person name="Dalrymple B.P."/>
            <person name="de Bono B."/>
            <person name="Della Gatta G."/>
            <person name="di Bernardo D."/>
            <person name="Down T."/>
            <person name="Engstrom P."/>
            <person name="Fagiolini M."/>
            <person name="Faulkner G."/>
            <person name="Fletcher C.F."/>
            <person name="Fukushima T."/>
            <person name="Furuno M."/>
            <person name="Futaki S."/>
            <person name="Gariboldi M."/>
            <person name="Georgii-Hemming P."/>
            <person name="Gingeras T.R."/>
            <person name="Gojobori T."/>
            <person name="Green R.E."/>
            <person name="Gustincich S."/>
            <person name="Harbers M."/>
            <person name="Hayashi Y."/>
            <person name="Hensch T.K."/>
            <person name="Hirokawa N."/>
            <person name="Hill D."/>
            <person name="Huminiecki L."/>
            <person name="Iacono M."/>
            <person name="Ikeo K."/>
            <person name="Iwama A."/>
            <person name="Ishikawa T."/>
            <person name="Jakt M."/>
            <person name="Kanapin A."/>
            <person name="Katoh M."/>
            <person name="Kawasawa Y."/>
            <person name="Kelso J."/>
            <person name="Kitamura H."/>
            <person name="Kitano H."/>
            <person name="Kollias G."/>
            <person name="Krishnan S.P."/>
            <person name="Kruger A."/>
            <person name="Kummerfeld S.K."/>
            <person name="Kurochkin I.V."/>
            <person name="Lareau L.F."/>
            <person name="Lazarevic D."/>
            <person name="Lipovich L."/>
            <person name="Liu J."/>
            <person name="Liuni S."/>
            <person name="McWilliam S."/>
            <person name="Madan Babu M."/>
            <person name="Madera M."/>
            <person name="Marchionni L."/>
            <person name="Matsuda H."/>
            <person name="Matsuzawa S."/>
            <person name="Miki H."/>
            <person name="Mignone F."/>
            <person name="Miyake S."/>
            <person name="Morris K."/>
            <person name="Mottagui-Tabar S."/>
            <person name="Mulder N."/>
            <person name="Nakano N."/>
            <person name="Nakauchi H."/>
            <person name="Ng P."/>
            <person name="Nilsson R."/>
            <person name="Nishiguchi S."/>
            <person name="Nishikawa S."/>
            <person name="Nori F."/>
            <person name="Ohara O."/>
            <person name="Okazaki Y."/>
            <person name="Orlando V."/>
            <person name="Pang K.C."/>
            <person name="Pavan W.J."/>
            <person name="Pavesi G."/>
            <person name="Pesole G."/>
            <person name="Petrovsky N."/>
            <person name="Piazza S."/>
            <person name="Reed J."/>
            <person name="Reid J.F."/>
            <person name="Ring B.Z."/>
            <person name="Ringwald M."/>
            <person name="Rost B."/>
            <person name="Ruan Y."/>
            <person name="Salzberg S.L."/>
            <person name="Sandelin A."/>
            <person name="Schneider C."/>
            <person name="Schoenbach C."/>
            <person name="Sekiguchi K."/>
            <person name="Semple C.A."/>
            <person name="Seno S."/>
            <person name="Sessa L."/>
            <person name="Sheng Y."/>
            <person name="Shibata Y."/>
            <person name="Shimada H."/>
            <person name="Shimada K."/>
            <person name="Silva D."/>
            <person name="Sinclair B."/>
            <person name="Sperling S."/>
            <person name="Stupka E."/>
            <person name="Sugiura K."/>
            <person name="Sultana R."/>
            <person name="Takenaka Y."/>
            <person name="Taki K."/>
            <person name="Tammoja K."/>
            <person name="Tan S.L."/>
            <person name="Tang S."/>
            <person name="Taylor M.S."/>
            <person name="Tegner J."/>
            <person name="Teichmann S.A."/>
            <person name="Ueda H.R."/>
            <person name="van Nimwegen E."/>
            <person name="Verardo R."/>
            <person name="Wei C.L."/>
            <person name="Yagi K."/>
            <person name="Yamanishi H."/>
            <person name="Zabarovsky E."/>
            <person name="Zhu S."/>
            <person name="Zimmer A."/>
            <person name="Hide W."/>
            <person name="Bult C."/>
            <person name="Grimmond S.M."/>
            <person name="Teasdale R.D."/>
            <person name="Liu E.T."/>
            <person name="Brusic V."/>
            <person name="Quackenbush J."/>
            <person name="Wahlestedt C."/>
            <person name="Mattick J.S."/>
            <person name="Hume D.A."/>
            <person name="Kai C."/>
            <person name="Sasaki D."/>
            <person name="Tomaru Y."/>
            <person name="Fukuda S."/>
            <person name="Kanamori-Katayama M."/>
            <person name="Suzuki M."/>
            <person name="Aoki J."/>
            <person name="Arakawa T."/>
            <person name="Iida J."/>
            <person name="Imamura K."/>
            <person name="Itoh M."/>
            <person name="Kato T."/>
            <person name="Kawaji H."/>
            <person name="Kawagashira N."/>
            <person name="Kawashima T."/>
            <person name="Kojima M."/>
            <person name="Kondo S."/>
            <person name="Konno H."/>
            <person name="Nakano K."/>
            <person name="Ninomiya N."/>
            <person name="Nishio T."/>
            <person name="Okada M."/>
            <person name="Plessy C."/>
            <person name="Shibata K."/>
            <person name="Shiraki T."/>
            <person name="Suzuki S."/>
            <person name="Tagami M."/>
            <person name="Waki K."/>
            <person name="Watahiki A."/>
            <person name="Okamura-Oho Y."/>
            <person name="Suzuki H."/>
            <person name="Kawai J."/>
            <person name="Hayashizaki Y."/>
        </authorList>
    </citation>
    <scope>NUCLEOTIDE SEQUENCE [LARGE SCALE MRNA]</scope>
    <source>
        <strain>C57BL/6J</strain>
        <tissue>Bone marrow</tissue>
    </source>
</reference>
<reference key="3">
    <citation type="journal article" date="2004" name="Genome Res.">
        <title>The status, quality, and expansion of the NIH full-length cDNA project: the Mammalian Gene Collection (MGC).</title>
        <authorList>
            <consortium name="The MGC Project Team"/>
        </authorList>
    </citation>
    <scope>NUCLEOTIDE SEQUENCE [LARGE SCALE MRNA]</scope>
    <source>
        <tissue>Eye</tissue>
        <tissue>Testis</tissue>
    </source>
</reference>
<reference key="4">
    <citation type="journal article" date="2006" name="Invest. Ophthalmol. Vis. Sci.">
        <title>Distribution of CESP-1 protein in the corneal endothelium and other tissues.</title>
        <authorList>
            <person name="Kinouchi R."/>
            <person name="Kinouchi T."/>
            <person name="Hamamoto T."/>
            <person name="Saito T."/>
            <person name="Tavares A."/>
            <person name="Tsuru T."/>
            <person name="Yamagami S."/>
        </authorList>
    </citation>
    <scope>TISSUE SPECIFICITY</scope>
</reference>
<reference key="5">
    <citation type="journal article" date="2009" name="Endocrinology">
        <title>Expression of ovary-specific acidic protein in steroidogenic tissues: a possible role in steroidogenesis.</title>
        <authorList>
            <person name="Matsumoto T."/>
            <person name="Minegishi K."/>
            <person name="Ishimoto H."/>
            <person name="Tanaka M."/>
            <person name="Hennebold J.D."/>
            <person name="Teranishi T."/>
            <person name="Hattori Y."/>
            <person name="Furuya M."/>
            <person name="Higuchi T."/>
            <person name="Asai S."/>
            <person name="Kim S.H."/>
            <person name="Miyakoshi K."/>
            <person name="Yoshimura Y."/>
        </authorList>
    </citation>
    <scope>FUNCTION IN STEROIDOGENESIS</scope>
    <scope>SUBCELLULAR LOCATION</scope>
    <scope>INDUCTION</scope>
    <scope>TISSUE SPECIFICITY</scope>
</reference>
<reference key="6">
    <citation type="journal article" date="2009" name="J. Cell Biol.">
        <title>HUMMR, a hypoxia- and HIF-1alpha-inducible protein, alters mitochondrial distribution and transport.</title>
        <authorList>
            <person name="Li Y."/>
            <person name="Lim S."/>
            <person name="Hoffman D."/>
            <person name="Aspenstrom P."/>
            <person name="Federoff H.J."/>
            <person name="Rempe D.A."/>
        </authorList>
    </citation>
    <scope>FUNCTION IN MITOCHONDRIAL TRANSPORT</scope>
    <scope>INTERACTION WITH RHOT1; RHOT2; TRAK1 AND TRAK2</scope>
    <scope>TOPOLOGY</scope>
    <scope>INDUCTION</scope>
    <scope>DISRUPTION PHENOTYPE</scope>
    <scope>SUBCELLULAR LOCATION</scope>
    <scope>TISSUE SPECIFICITY</scope>
</reference>
<reference key="7">
    <citation type="journal article" date="2011" name="Endocrinology">
        <title>The expression of a mitochondria-localized glutamic acid-rich protein (MGARP/OSAP) is under the regulation of the HPG axis.</title>
        <authorList>
            <person name="Zhou M."/>
            <person name="Wang Y."/>
            <person name="Qi S."/>
            <person name="Wang J."/>
            <person name="Zhang S."/>
        </authorList>
    </citation>
    <scope>TISSUE SPECIFICITY</scope>
</reference>
<reference key="8">
    <citation type="journal article" date="2011" name="Mol. Biol. Rep.">
        <title>A mitochondria-localized glutamic acid-rich protein (MGARP/OSAP) is highly expressed in retina that exhibits a large area of intrinsic disorder.</title>
        <authorList>
            <person name="Qi S."/>
            <person name="Wang Y."/>
            <person name="Zhou M."/>
            <person name="Ge Y."/>
            <person name="Yan Y."/>
            <person name="Wang J."/>
            <person name="Zhang S.S."/>
            <person name="Zhang S."/>
        </authorList>
    </citation>
    <scope>SUBCELLULAR LOCATION</scope>
    <scope>INDUCTION</scope>
    <scope>TISSUE SPECIFICITY</scope>
</reference>
<reference key="9">
    <citation type="journal article" date="2014" name="Mol. Neurobiol.">
        <title>MGARP regulates mouse neocortical development via mitochondrial positioning.</title>
        <authorList>
            <person name="Jia L."/>
            <person name="Liang T."/>
            <person name="Yu X."/>
            <person name="Ma C."/>
            <person name="Zhang S."/>
        </authorList>
    </citation>
    <scope>FUNCTION</scope>
    <scope>DISRUPTION PHENOTYPE</scope>
    <scope>SUBCELLULAR LOCATION</scope>
</reference>
<reference key="10">
    <citation type="journal article" date="2019" name="Biochem. Biophys. Res. Commun.">
        <title>MGARP is ultrastructurally located in the inner faces of mitochondrial membranes.</title>
        <authorList>
            <person name="Zhang S."/>
        </authorList>
    </citation>
    <scope>SUBCELLULAR LOCATION</scope>
    <scope>TOPOLOGY</scope>
</reference>
<proteinExistence type="evidence at protein level"/>